<keyword id="KW-0238">DNA-binding</keyword>
<keyword id="KW-0539">Nucleus</keyword>
<keyword id="KW-1185">Reference proteome</keyword>
<evidence type="ECO:0000250" key="1">
    <source>
        <dbReference type="UniProtKB" id="P27344"/>
    </source>
</evidence>
<evidence type="ECO:0000250" key="2">
    <source>
        <dbReference type="UniProtKB" id="Q9NR33"/>
    </source>
</evidence>
<evidence type="ECO:0000256" key="3">
    <source>
        <dbReference type="SAM" id="MobiDB-lite"/>
    </source>
</evidence>
<evidence type="ECO:0000305" key="4"/>
<feature type="chain" id="PRO_0000328528" description="DNA polymerase epsilon subunit 4">
    <location>
        <begin position="1"/>
        <end position="116"/>
    </location>
</feature>
<feature type="region of interest" description="Disordered" evidence="3">
    <location>
        <begin position="1"/>
        <end position="36"/>
    </location>
</feature>
<feature type="compositionally biased region" description="Low complexity" evidence="3">
    <location>
        <begin position="1"/>
        <end position="10"/>
    </location>
</feature>
<comment type="function">
    <text evidence="1 2">Accessory component of the DNA polymerase epsilon complex (By similarity). Participates in DNA repair and in chromosomal DNA replication (By similarity).</text>
</comment>
<comment type="subunit">
    <text evidence="2">Component of the DNA polymerase epsilon complex consisting of four subunits: the catalytic subunit POLE and the accessory subunits POLE2, POLE3 and POLE4. Interaction with POLE3 is a prerequisite for further binding with POLE and POLE2.</text>
</comment>
<comment type="subcellular location">
    <subcellularLocation>
        <location evidence="4">Nucleus</location>
    </subcellularLocation>
</comment>
<proteinExistence type="inferred from homology"/>
<sequence length="116" mass="12065">MAAAAPGSGAAREEEGTGGDAATPQPPAPTSAPGARLSRLPLARVKALVKADPDVTLAGQEAIFILARAAELFVETIAKDAYCCAQQGKRKTLQRRDLDNAIEAVDEFAFLEGTLD</sequence>
<organism>
    <name type="scientific">Bos taurus</name>
    <name type="common">Bovine</name>
    <dbReference type="NCBI Taxonomy" id="9913"/>
    <lineage>
        <taxon>Eukaryota</taxon>
        <taxon>Metazoa</taxon>
        <taxon>Chordata</taxon>
        <taxon>Craniata</taxon>
        <taxon>Vertebrata</taxon>
        <taxon>Euteleostomi</taxon>
        <taxon>Mammalia</taxon>
        <taxon>Eutheria</taxon>
        <taxon>Laurasiatheria</taxon>
        <taxon>Artiodactyla</taxon>
        <taxon>Ruminantia</taxon>
        <taxon>Pecora</taxon>
        <taxon>Bovidae</taxon>
        <taxon>Bovinae</taxon>
        <taxon>Bos</taxon>
    </lineage>
</organism>
<name>DPOE4_BOVIN</name>
<protein>
    <recommendedName>
        <fullName>DNA polymerase epsilon subunit 4</fullName>
    </recommendedName>
    <alternativeName>
        <fullName>DNA polymerase II subunit 4</fullName>
    </alternativeName>
</protein>
<dbReference type="EMBL" id="BC149592">
    <property type="protein sequence ID" value="AAI49593.1"/>
    <property type="molecule type" value="mRNA"/>
</dbReference>
<dbReference type="RefSeq" id="NP_001094695.1">
    <property type="nucleotide sequence ID" value="NM_001101225.2"/>
</dbReference>
<dbReference type="SMR" id="A6QQ14"/>
<dbReference type="FunCoup" id="A6QQ14">
    <property type="interactions" value="1870"/>
</dbReference>
<dbReference type="STRING" id="9913.ENSBTAP00000044967"/>
<dbReference type="PaxDb" id="9913-ENSBTAP00000044967"/>
<dbReference type="Ensembl" id="ENSBTAT00000097410.1">
    <property type="protein sequence ID" value="ENSBTAP00000103747.1"/>
    <property type="gene ID" value="ENSBTAG00000062291.1"/>
</dbReference>
<dbReference type="GeneID" id="613730"/>
<dbReference type="KEGG" id="bta:613730"/>
<dbReference type="CTD" id="56655"/>
<dbReference type="VEuPathDB" id="HostDB:ENSBTAG00000017189"/>
<dbReference type="eggNOG" id="KOG1658">
    <property type="taxonomic scope" value="Eukaryota"/>
</dbReference>
<dbReference type="GeneTree" id="ENSGT00940000160888"/>
<dbReference type="HOGENOM" id="CLU_045277_8_0_1"/>
<dbReference type="InParanoid" id="A6QQ14"/>
<dbReference type="OMA" id="CYAFLEG"/>
<dbReference type="OrthoDB" id="636685at2759"/>
<dbReference type="TreeFam" id="TF103009"/>
<dbReference type="Reactome" id="R-BTA-110314">
    <property type="pathway name" value="Recognition of DNA damage by PCNA-containing replication complex"/>
</dbReference>
<dbReference type="Reactome" id="R-BTA-5651801">
    <property type="pathway name" value="PCNA-Dependent Long Patch Base Excision Repair"/>
</dbReference>
<dbReference type="Reactome" id="R-BTA-5656169">
    <property type="pathway name" value="Termination of translesion DNA synthesis"/>
</dbReference>
<dbReference type="Reactome" id="R-BTA-5685942">
    <property type="pathway name" value="HDR through Homologous Recombination (HRR)"/>
</dbReference>
<dbReference type="Reactome" id="R-BTA-5696397">
    <property type="pathway name" value="Gap-filling DNA repair synthesis and ligation in GG-NER"/>
</dbReference>
<dbReference type="Reactome" id="R-BTA-5696400">
    <property type="pathway name" value="Dual Incision in GG-NER"/>
</dbReference>
<dbReference type="Reactome" id="R-BTA-6782135">
    <property type="pathway name" value="Dual incision in TC-NER"/>
</dbReference>
<dbReference type="Reactome" id="R-BTA-6782210">
    <property type="pathway name" value="Gap-filling DNA repair synthesis and ligation in TC-NER"/>
</dbReference>
<dbReference type="Reactome" id="R-BTA-68952">
    <property type="pathway name" value="DNA replication initiation"/>
</dbReference>
<dbReference type="Reactome" id="R-BTA-68962">
    <property type="pathway name" value="Activation of the pre-replicative complex"/>
</dbReference>
<dbReference type="Proteomes" id="UP000009136">
    <property type="component" value="Chromosome 11"/>
</dbReference>
<dbReference type="Bgee" id="ENSBTAG00000017189">
    <property type="expression patterns" value="Expressed in thyroid gland and 107 other cell types or tissues"/>
</dbReference>
<dbReference type="GO" id="GO:0140672">
    <property type="term" value="C:ATAC complex"/>
    <property type="evidence" value="ECO:0007669"/>
    <property type="project" value="Ensembl"/>
</dbReference>
<dbReference type="GO" id="GO:0008622">
    <property type="term" value="C:epsilon DNA polymerase complex"/>
    <property type="evidence" value="ECO:0000250"/>
    <property type="project" value="UniProtKB"/>
</dbReference>
<dbReference type="GO" id="GO:0005654">
    <property type="term" value="C:nucleoplasm"/>
    <property type="evidence" value="ECO:0007669"/>
    <property type="project" value="Ensembl"/>
</dbReference>
<dbReference type="GO" id="GO:0005634">
    <property type="term" value="C:nucleus"/>
    <property type="evidence" value="ECO:0000318"/>
    <property type="project" value="GO_Central"/>
</dbReference>
<dbReference type="GO" id="GO:0003677">
    <property type="term" value="F:DNA binding"/>
    <property type="evidence" value="ECO:0007669"/>
    <property type="project" value="UniProtKB-KW"/>
</dbReference>
<dbReference type="GO" id="GO:0046982">
    <property type="term" value="F:protein heterodimerization activity"/>
    <property type="evidence" value="ECO:0007669"/>
    <property type="project" value="InterPro"/>
</dbReference>
<dbReference type="GO" id="GO:0006261">
    <property type="term" value="P:DNA-templated DNA replication"/>
    <property type="evidence" value="ECO:0000318"/>
    <property type="project" value="GO_Central"/>
</dbReference>
<dbReference type="CDD" id="cd22929">
    <property type="entry name" value="HFD_POLE4-like"/>
    <property type="match status" value="1"/>
</dbReference>
<dbReference type="FunFam" id="1.10.20.10:FF:000051">
    <property type="entry name" value="DNA polymerase epsilon 4, accessory subunit"/>
    <property type="match status" value="1"/>
</dbReference>
<dbReference type="Gene3D" id="1.10.20.10">
    <property type="entry name" value="Histone, subunit A"/>
    <property type="match status" value="1"/>
</dbReference>
<dbReference type="InterPro" id="IPR003958">
    <property type="entry name" value="CBFA_NFYB_domain"/>
</dbReference>
<dbReference type="InterPro" id="IPR009072">
    <property type="entry name" value="Histone-fold"/>
</dbReference>
<dbReference type="InterPro" id="IPR050568">
    <property type="entry name" value="Transcr_DNA_Rep_Reg"/>
</dbReference>
<dbReference type="PANTHER" id="PTHR10252:SF79">
    <property type="entry name" value="DNA POLYMERASE EPSILON SUBUNIT 4"/>
    <property type="match status" value="1"/>
</dbReference>
<dbReference type="PANTHER" id="PTHR10252">
    <property type="entry name" value="HISTONE-LIKE TRANSCRIPTION FACTOR CCAAT-RELATED"/>
    <property type="match status" value="1"/>
</dbReference>
<dbReference type="Pfam" id="PF00808">
    <property type="entry name" value="CBFD_NFYB_HMF"/>
    <property type="match status" value="1"/>
</dbReference>
<dbReference type="SUPFAM" id="SSF47113">
    <property type="entry name" value="Histone-fold"/>
    <property type="match status" value="1"/>
</dbReference>
<reference key="1">
    <citation type="submission" date="2007-07" db="EMBL/GenBank/DDBJ databases">
        <authorList>
            <consortium name="NIH - Mammalian Gene Collection (MGC) project"/>
        </authorList>
    </citation>
    <scope>NUCLEOTIDE SEQUENCE [LARGE SCALE MRNA]</scope>
    <source>
        <strain>Hereford</strain>
        <tissue>Hypothalamus</tissue>
    </source>
</reference>
<accession>A6QQ14</accession>
<gene>
    <name type="primary">POLE4</name>
</gene>